<proteinExistence type="uncertain"/>
<evidence type="ECO:0000255" key="1"/>
<evidence type="ECO:0000305" key="2"/>
<evidence type="ECO:0000305" key="3">
    <source>
    </source>
</evidence>
<gene>
    <name type="ordered locus">YJL086C</name>
    <name type="ORF">J0930</name>
</gene>
<accession>P47028</accession>
<reference key="1">
    <citation type="journal article" date="1995" name="Yeast">
        <title>Sequence analysis of a 33.1 kb fragment from the left arm of Saccharomyces cerevisiae chromosome X, including putative proteins with leucine zippers, a fungal Zn(II)2-Cys6 binuclear cluster domain and a putative alpha 2-SCB-alpha 2 binding site.</title>
        <authorList>
            <person name="Miosga T."/>
            <person name="Schaaff-Gerstenschlaeger I."/>
            <person name="Chalwatzis N."/>
            <person name="Baur A."/>
            <person name="Boles E."/>
            <person name="Fournier C."/>
            <person name="Schmitt S."/>
            <person name="Velten C."/>
            <person name="Wilhelm N."/>
            <person name="Zimmermann F.K."/>
        </authorList>
    </citation>
    <scope>NUCLEOTIDE SEQUENCE [GENOMIC DNA]</scope>
    <source>
        <strain>ATCC 204508 / S288c</strain>
    </source>
</reference>
<reference key="2">
    <citation type="journal article" date="1996" name="EMBO J.">
        <title>Complete nucleotide sequence of Saccharomyces cerevisiae chromosome X.</title>
        <authorList>
            <person name="Galibert F."/>
            <person name="Alexandraki D."/>
            <person name="Baur A."/>
            <person name="Boles E."/>
            <person name="Chalwatzis N."/>
            <person name="Chuat J.-C."/>
            <person name="Coster F."/>
            <person name="Cziepluch C."/>
            <person name="de Haan M."/>
            <person name="Domdey H."/>
            <person name="Durand P."/>
            <person name="Entian K.-D."/>
            <person name="Gatius M."/>
            <person name="Goffeau A."/>
            <person name="Grivell L.A."/>
            <person name="Hennemann A."/>
            <person name="Herbert C.J."/>
            <person name="Heumann K."/>
            <person name="Hilger F."/>
            <person name="Hollenberg C.P."/>
            <person name="Huang M.-E."/>
            <person name="Jacq C."/>
            <person name="Jauniaux J.-C."/>
            <person name="Katsoulou C."/>
            <person name="Kirchrath L."/>
            <person name="Kleine K."/>
            <person name="Kordes E."/>
            <person name="Koetter P."/>
            <person name="Liebl S."/>
            <person name="Louis E.J."/>
            <person name="Manus V."/>
            <person name="Mewes H.-W."/>
            <person name="Miosga T."/>
            <person name="Obermaier B."/>
            <person name="Perea J."/>
            <person name="Pohl T.M."/>
            <person name="Portetelle D."/>
            <person name="Pujol A."/>
            <person name="Purnelle B."/>
            <person name="Ramezani Rad M."/>
            <person name="Rasmussen S.W."/>
            <person name="Rose M."/>
            <person name="Rossau R."/>
            <person name="Schaaff-Gerstenschlaeger I."/>
            <person name="Smits P.H.M."/>
            <person name="Scarcez T."/>
            <person name="Soriano N."/>
            <person name="To Van D."/>
            <person name="Tzermia M."/>
            <person name="Van Broekhoven A."/>
            <person name="Vandenbol M."/>
            <person name="Wedler H."/>
            <person name="von Wettstein D."/>
            <person name="Wambutt R."/>
            <person name="Zagulski M."/>
            <person name="Zollner A."/>
            <person name="Karpfinger-Hartl L."/>
        </authorList>
    </citation>
    <scope>NUCLEOTIDE SEQUENCE [LARGE SCALE GENOMIC DNA]</scope>
    <source>
        <strain>ATCC 204508 / S288c</strain>
    </source>
</reference>
<reference key="3">
    <citation type="journal article" date="2014" name="G3 (Bethesda)">
        <title>The reference genome sequence of Saccharomyces cerevisiae: Then and now.</title>
        <authorList>
            <person name="Engel S.R."/>
            <person name="Dietrich F.S."/>
            <person name="Fisk D.G."/>
            <person name="Binkley G."/>
            <person name="Balakrishnan R."/>
            <person name="Costanzo M.C."/>
            <person name="Dwight S.S."/>
            <person name="Hitz B.C."/>
            <person name="Karra K."/>
            <person name="Nash R.S."/>
            <person name="Weng S."/>
            <person name="Wong E.D."/>
            <person name="Lloyd P."/>
            <person name="Skrzypek M.S."/>
            <person name="Miyasato S.R."/>
            <person name="Simison M."/>
            <person name="Cherry J.M."/>
        </authorList>
    </citation>
    <scope>GENOME REANNOTATION</scope>
    <source>
        <strain>ATCC 204508 / S288c</strain>
    </source>
</reference>
<reference key="4">
    <citation type="journal article" date="2007" name="Genome Res.">
        <title>Approaching a complete repository of sequence-verified protein-encoding clones for Saccharomyces cerevisiae.</title>
        <authorList>
            <person name="Hu Y."/>
            <person name="Rolfs A."/>
            <person name="Bhullar B."/>
            <person name="Murthy T.V.S."/>
            <person name="Zhu C."/>
            <person name="Berger M.F."/>
            <person name="Camargo A.A."/>
            <person name="Kelley F."/>
            <person name="McCarron S."/>
            <person name="Jepson D."/>
            <person name="Richardson A."/>
            <person name="Raphael J."/>
            <person name="Moreira D."/>
            <person name="Taycher E."/>
            <person name="Zuo D."/>
            <person name="Mohr S."/>
            <person name="Kane M.F."/>
            <person name="Williamson J."/>
            <person name="Simpson A.J.G."/>
            <person name="Bulyk M.L."/>
            <person name="Harlow E."/>
            <person name="Marsischky G."/>
            <person name="Kolodner R.D."/>
            <person name="LaBaer J."/>
        </authorList>
    </citation>
    <scope>NUCLEOTIDE SEQUENCE [GENOMIC DNA]</scope>
    <source>
        <strain>ATCC 204508 / S288c</strain>
    </source>
</reference>
<comment type="subcellular location">
    <subcellularLocation>
        <location evidence="2">Membrane</location>
        <topology evidence="2">Single-pass membrane protein</topology>
    </subcellularLocation>
</comment>
<comment type="miscellaneous">
    <text evidence="2">Partially overlaps EXO70 and TRL1.</text>
</comment>
<comment type="caution">
    <text evidence="3">Product of a dubious gene prediction unlikely to encode a functional protein. Because of that it is not part of the S.cerevisiae S288c complete/reference proteome set.</text>
</comment>
<keyword id="KW-0472">Membrane</keyword>
<keyword id="KW-0812">Transmembrane</keyword>
<keyword id="KW-1133">Transmembrane helix</keyword>
<sequence length="122" mass="14154">MSISAGISINAFDIIKPEHFNGPLLFTASTLRVHSPWFSNTFKHTVSVNYLYVPAGRPRTFPLIKFHYEFIPKKVYRRASNSFHSVENCFEQILRICIVFLSLKIYTLTLVIIKVFIRRSDA</sequence>
<feature type="chain" id="PRO_0000203048" description="Putative uncharacterized protein YJL086C">
    <location>
        <begin position="1"/>
        <end position="122"/>
    </location>
</feature>
<feature type="transmembrane region" description="Helical" evidence="1">
    <location>
        <begin position="93"/>
        <end position="113"/>
    </location>
</feature>
<protein>
    <recommendedName>
        <fullName>Putative uncharacterized protein YJL086C</fullName>
    </recommendedName>
</protein>
<dbReference type="EMBL" id="J03546">
    <property type="protein sequence ID" value="AAA66920.1"/>
    <property type="molecule type" value="Genomic_DNA"/>
</dbReference>
<dbReference type="EMBL" id="X83502">
    <property type="protein sequence ID" value="CAA58484.1"/>
    <property type="molecule type" value="Genomic_DNA"/>
</dbReference>
<dbReference type="EMBL" id="Z49362">
    <property type="protein sequence ID" value="CAA89379.1"/>
    <property type="molecule type" value="Genomic_DNA"/>
</dbReference>
<dbReference type="EMBL" id="AY558250">
    <property type="protein sequence ID" value="AAS56576.1"/>
    <property type="molecule type" value="Genomic_DNA"/>
</dbReference>
<dbReference type="PIR" id="S56024">
    <property type="entry name" value="S56024"/>
</dbReference>
<dbReference type="SMR" id="P47028"/>
<dbReference type="DIP" id="DIP-5517N"/>
<dbReference type="PaxDb" id="4932-YJL086C"/>
<dbReference type="EnsemblFungi" id="YJL086C_mRNA">
    <property type="protein sequence ID" value="YJL086C"/>
    <property type="gene ID" value="YJL086C"/>
</dbReference>
<dbReference type="AGR" id="SGD:S000003622"/>
<dbReference type="SGD" id="S000003622">
    <property type="gene designation" value="YJL086C"/>
</dbReference>
<dbReference type="HOGENOM" id="CLU_2028523_0_0_1"/>
<dbReference type="GO" id="GO:0016020">
    <property type="term" value="C:membrane"/>
    <property type="evidence" value="ECO:0007669"/>
    <property type="project" value="UniProtKB-SubCell"/>
</dbReference>
<name>YJI6_YEAST</name>
<organism>
    <name type="scientific">Saccharomyces cerevisiae (strain ATCC 204508 / S288c)</name>
    <name type="common">Baker's yeast</name>
    <dbReference type="NCBI Taxonomy" id="559292"/>
    <lineage>
        <taxon>Eukaryota</taxon>
        <taxon>Fungi</taxon>
        <taxon>Dikarya</taxon>
        <taxon>Ascomycota</taxon>
        <taxon>Saccharomycotina</taxon>
        <taxon>Saccharomycetes</taxon>
        <taxon>Saccharomycetales</taxon>
        <taxon>Saccharomycetaceae</taxon>
        <taxon>Saccharomyces</taxon>
    </lineage>
</organism>